<organism>
    <name type="scientific">Mus musculus</name>
    <name type="common">Mouse</name>
    <dbReference type="NCBI Taxonomy" id="10090"/>
    <lineage>
        <taxon>Eukaryota</taxon>
        <taxon>Metazoa</taxon>
        <taxon>Chordata</taxon>
        <taxon>Craniata</taxon>
        <taxon>Vertebrata</taxon>
        <taxon>Euteleostomi</taxon>
        <taxon>Mammalia</taxon>
        <taxon>Eutheria</taxon>
        <taxon>Euarchontoglires</taxon>
        <taxon>Glires</taxon>
        <taxon>Rodentia</taxon>
        <taxon>Myomorpha</taxon>
        <taxon>Muroidea</taxon>
        <taxon>Muridae</taxon>
        <taxon>Murinae</taxon>
        <taxon>Mus</taxon>
        <taxon>Mus</taxon>
    </lineage>
</organism>
<keyword id="KW-0007">Acetylation</keyword>
<keyword id="KW-0025">Alternative splicing</keyword>
<keyword id="KW-0072">Autophagy</keyword>
<keyword id="KW-0963">Cytoplasm</keyword>
<keyword id="KW-0479">Metal-binding</keyword>
<keyword id="KW-0539">Nucleus</keyword>
<keyword id="KW-0597">Phosphoprotein</keyword>
<keyword id="KW-1185">Reference proteome</keyword>
<keyword id="KW-0833">Ubl conjugation pathway</keyword>
<keyword id="KW-0862">Zinc</keyword>
<keyword id="KW-0863">Zinc-finger</keyword>
<dbReference type="EMBL" id="AY099326">
    <property type="protein sequence ID" value="AAM44127.1"/>
    <property type="molecule type" value="mRNA"/>
</dbReference>
<dbReference type="EMBL" id="AY099327">
    <property type="protein sequence ID" value="AAM44128.1"/>
    <property type="molecule type" value="mRNA"/>
</dbReference>
<dbReference type="EMBL" id="AK019135">
    <property type="protein sequence ID" value="BAB31562.1"/>
    <property type="molecule type" value="mRNA"/>
</dbReference>
<dbReference type="EMBL" id="AK027950">
    <property type="protein sequence ID" value="BAC25679.1"/>
    <property type="status" value="ALT_INIT"/>
    <property type="molecule type" value="mRNA"/>
</dbReference>
<dbReference type="EMBL" id="AK029376">
    <property type="protein sequence ID" value="BAC26426.1"/>
    <property type="molecule type" value="mRNA"/>
</dbReference>
<dbReference type="EMBL" id="AK031159">
    <property type="protein sequence ID" value="BAC27285.1"/>
    <property type="molecule type" value="mRNA"/>
</dbReference>
<dbReference type="EMBL" id="AK170729">
    <property type="protein sequence ID" value="BAE41985.1"/>
    <property type="molecule type" value="mRNA"/>
</dbReference>
<dbReference type="EMBL" id="AL596185">
    <property type="status" value="NOT_ANNOTATED_CDS"/>
    <property type="molecule type" value="Genomic_DNA"/>
</dbReference>
<dbReference type="EMBL" id="BC033533">
    <property type="protein sequence ID" value="AAH33533.1"/>
    <property type="status" value="ALT_INIT"/>
    <property type="molecule type" value="mRNA"/>
</dbReference>
<dbReference type="CCDS" id="CCDS24929.1">
    <molecule id="Q8BSN5-1"/>
</dbReference>
<dbReference type="CCDS" id="CCDS70223.1">
    <molecule id="Q8BSN5-2"/>
</dbReference>
<dbReference type="CCDS" id="CCDS78976.1">
    <molecule id="Q8BSN5-3"/>
</dbReference>
<dbReference type="RefSeq" id="NP_001278054.1">
    <molecule id="Q8BSN5-2"/>
    <property type="nucleotide sequence ID" value="NM_001291125.1"/>
</dbReference>
<dbReference type="RefSeq" id="NP_001278055.1">
    <molecule id="Q8BSN5-3"/>
    <property type="nucleotide sequence ID" value="NM_001291126.1"/>
</dbReference>
<dbReference type="RefSeq" id="NP_001278056.1">
    <molecule id="Q8BSN5-3"/>
    <property type="nucleotide sequence ID" value="NM_001291127.1"/>
</dbReference>
<dbReference type="RefSeq" id="NP_084340.2">
    <molecule id="Q8BSN5-1"/>
    <property type="nucleotide sequence ID" value="NM_030064.4"/>
</dbReference>
<dbReference type="RefSeq" id="XP_006534565.2">
    <property type="nucleotide sequence ID" value="XM_006534502.2"/>
</dbReference>
<dbReference type="RefSeq" id="XP_030102287.1">
    <molecule id="Q8BSN5-3"/>
    <property type="nucleotide sequence ID" value="XM_030246427.2"/>
</dbReference>
<dbReference type="RefSeq" id="XP_030102288.1">
    <molecule id="Q8BSN5-3"/>
    <property type="nucleotide sequence ID" value="XM_030246428.2"/>
</dbReference>
<dbReference type="RefSeq" id="XP_030102289.1">
    <molecule id="Q8BSN5-3"/>
    <property type="nucleotide sequence ID" value="XM_030246429.1"/>
</dbReference>
<dbReference type="RefSeq" id="XP_036012984.1">
    <molecule id="Q8BSN5-3"/>
    <property type="nucleotide sequence ID" value="XM_036157091.1"/>
</dbReference>
<dbReference type="SMR" id="Q8BSN5"/>
<dbReference type="BioGRID" id="219277">
    <property type="interactions" value="1"/>
</dbReference>
<dbReference type="FunCoup" id="Q8BSN5">
    <property type="interactions" value="3027"/>
</dbReference>
<dbReference type="STRING" id="10090.ENSMUSP00000018716"/>
<dbReference type="GlyGen" id="Q8BSN5">
    <property type="glycosylation" value="2 sites"/>
</dbReference>
<dbReference type="iPTMnet" id="Q8BSN5"/>
<dbReference type="PhosphoSitePlus" id="Q8BSN5"/>
<dbReference type="SwissPalm" id="Q8BSN5"/>
<dbReference type="jPOST" id="Q8BSN5"/>
<dbReference type="PaxDb" id="10090-ENSMUSP00000018716"/>
<dbReference type="PeptideAtlas" id="Q8BSN5"/>
<dbReference type="ProteomicsDB" id="287700">
    <molecule id="Q8BSN5-1"/>
</dbReference>
<dbReference type="ProteomicsDB" id="287701">
    <molecule id="Q8BSN5-2"/>
</dbReference>
<dbReference type="ProteomicsDB" id="287702">
    <molecule id="Q8BSN5-3"/>
</dbReference>
<dbReference type="Pumba" id="Q8BSN5"/>
<dbReference type="Antibodypedia" id="23960">
    <property type="antibodies" value="57 antibodies from 13 providers"/>
</dbReference>
<dbReference type="Ensembl" id="ENSMUST00000018716.10">
    <molecule id="Q8BSN5-1"/>
    <property type="protein sequence ID" value="ENSMUSP00000018716.4"/>
    <property type="gene ID" value="ENSMUSG00000018572.11"/>
</dbReference>
<dbReference type="Ensembl" id="ENSMUST00000101526.9">
    <molecule id="Q8BSN5-2"/>
    <property type="protein sequence ID" value="ENSMUSP00000099064.3"/>
    <property type="gene ID" value="ENSMUSG00000018572.11"/>
</dbReference>
<dbReference type="Ensembl" id="ENSMUST00000133485.8">
    <molecule id="Q8BSN5-3"/>
    <property type="protein sequence ID" value="ENSMUSP00000117373.2"/>
    <property type="gene ID" value="ENSMUSG00000018572.11"/>
</dbReference>
<dbReference type="Ensembl" id="ENSMUST00000135814.2">
    <molecule id="Q8BSN5-3"/>
    <property type="protein sequence ID" value="ENSMUSP00000120665.2"/>
    <property type="gene ID" value="ENSMUSG00000018572.11"/>
</dbReference>
<dbReference type="Ensembl" id="ENSMUST00000153684.8">
    <molecule id="Q8BSN5-3"/>
    <property type="protein sequence ID" value="ENSMUSP00000121780.2"/>
    <property type="gene ID" value="ENSMUSG00000018572.11"/>
</dbReference>
<dbReference type="GeneID" id="78246"/>
<dbReference type="KEGG" id="mmu:78246"/>
<dbReference type="UCSC" id="uc007jth.3">
    <molecule id="Q8BSN5-1"/>
    <property type="organism name" value="mouse"/>
</dbReference>
<dbReference type="UCSC" id="uc007jti.3">
    <molecule id="Q8BSN5-2"/>
    <property type="organism name" value="mouse"/>
</dbReference>
<dbReference type="AGR" id="MGI:1925496"/>
<dbReference type="CTD" id="79142"/>
<dbReference type="MGI" id="MGI:1925496">
    <property type="gene designation" value="Phf23"/>
</dbReference>
<dbReference type="VEuPathDB" id="HostDB:ENSMUSG00000018572"/>
<dbReference type="eggNOG" id="KOG1844">
    <property type="taxonomic scope" value="Eukaryota"/>
</dbReference>
<dbReference type="GeneTree" id="ENSGT00530000063882"/>
<dbReference type="HOGENOM" id="CLU_047981_1_0_1"/>
<dbReference type="InParanoid" id="Q8BSN5"/>
<dbReference type="OMA" id="CRDMRRS"/>
<dbReference type="OrthoDB" id="79252at2759"/>
<dbReference type="PhylomeDB" id="Q8BSN5"/>
<dbReference type="TreeFam" id="TF331373"/>
<dbReference type="BioGRID-ORCS" id="78246">
    <property type="hits" value="18 hits in 80 CRISPR screens"/>
</dbReference>
<dbReference type="ChiTaRS" id="Phf23">
    <property type="organism name" value="mouse"/>
</dbReference>
<dbReference type="PRO" id="PR:Q8BSN5"/>
<dbReference type="Proteomes" id="UP000000589">
    <property type="component" value="Chromosome 11"/>
</dbReference>
<dbReference type="RNAct" id="Q8BSN5">
    <property type="molecule type" value="protein"/>
</dbReference>
<dbReference type="Bgee" id="ENSMUSG00000018572">
    <property type="expression patterns" value="Expressed in embryonic brain and 269 other cell types or tissues"/>
</dbReference>
<dbReference type="ExpressionAtlas" id="Q8BSN5">
    <property type="expression patterns" value="baseline and differential"/>
</dbReference>
<dbReference type="GO" id="GO:0005829">
    <property type="term" value="C:cytosol"/>
    <property type="evidence" value="ECO:0007669"/>
    <property type="project" value="Ensembl"/>
</dbReference>
<dbReference type="GO" id="GO:0005654">
    <property type="term" value="C:nucleoplasm"/>
    <property type="evidence" value="ECO:0007669"/>
    <property type="project" value="Ensembl"/>
</dbReference>
<dbReference type="GO" id="GO:0008270">
    <property type="term" value="F:zinc ion binding"/>
    <property type="evidence" value="ECO:0007669"/>
    <property type="project" value="UniProtKB-KW"/>
</dbReference>
<dbReference type="GO" id="GO:0006914">
    <property type="term" value="P:autophagy"/>
    <property type="evidence" value="ECO:0007669"/>
    <property type="project" value="UniProtKB-KW"/>
</dbReference>
<dbReference type="GO" id="GO:1902902">
    <property type="term" value="P:negative regulation of autophagosome assembly"/>
    <property type="evidence" value="ECO:0000250"/>
    <property type="project" value="GO_Central"/>
</dbReference>
<dbReference type="GO" id="GO:1901097">
    <property type="term" value="P:negative regulation of autophagosome maturation"/>
    <property type="evidence" value="ECO:0000250"/>
    <property type="project" value="GO_Central"/>
</dbReference>
<dbReference type="GO" id="GO:0031398">
    <property type="term" value="P:positive regulation of protein ubiquitination"/>
    <property type="evidence" value="ECO:0000250"/>
    <property type="project" value="GO_Central"/>
</dbReference>
<dbReference type="CDD" id="cd15631">
    <property type="entry name" value="PHD_PHF23"/>
    <property type="match status" value="1"/>
</dbReference>
<dbReference type="Gene3D" id="3.30.40.10">
    <property type="entry name" value="Zinc/RING finger domain, C3HC4 (zinc finger)"/>
    <property type="match status" value="1"/>
</dbReference>
<dbReference type="InterPro" id="IPR011011">
    <property type="entry name" value="Znf_FYVE_PHD"/>
</dbReference>
<dbReference type="InterPro" id="IPR001965">
    <property type="entry name" value="Znf_PHD"/>
</dbReference>
<dbReference type="InterPro" id="IPR019787">
    <property type="entry name" value="Znf_PHD-finger"/>
</dbReference>
<dbReference type="InterPro" id="IPR013083">
    <property type="entry name" value="Znf_RING/FYVE/PHD"/>
</dbReference>
<dbReference type="PANTHER" id="PTHR14571">
    <property type="entry name" value="HISTONE-LYSINE N-METHYLTRANSFERASE SET-26-RELATED"/>
    <property type="match status" value="1"/>
</dbReference>
<dbReference type="PANTHER" id="PTHR14571:SF8">
    <property type="entry name" value="PHD FINGER PROTEIN 23"/>
    <property type="match status" value="1"/>
</dbReference>
<dbReference type="Pfam" id="PF13831">
    <property type="entry name" value="PHD_2"/>
    <property type="match status" value="1"/>
</dbReference>
<dbReference type="SMART" id="SM00249">
    <property type="entry name" value="PHD"/>
    <property type="match status" value="1"/>
</dbReference>
<dbReference type="SUPFAM" id="SSF57903">
    <property type="entry name" value="FYVE/PHD zinc finger"/>
    <property type="match status" value="1"/>
</dbReference>
<accession>Q8BSN5</accession>
<accession>Q3TCH1</accession>
<accession>Q8BT31</accession>
<accession>Q8CDY2</accession>
<accession>Q8CIA4</accession>
<accession>Q8CIU8</accession>
<accession>Q8CIU9</accession>
<accession>Q9CWC8</accession>
<evidence type="ECO:0000250" key="1">
    <source>
        <dbReference type="UniProtKB" id="Q9BUL5"/>
    </source>
</evidence>
<evidence type="ECO:0000256" key="2">
    <source>
        <dbReference type="SAM" id="MobiDB-lite"/>
    </source>
</evidence>
<evidence type="ECO:0000303" key="3">
    <source>
    </source>
</evidence>
<evidence type="ECO:0000303" key="4">
    <source>
    </source>
</evidence>
<evidence type="ECO:0000303" key="5">
    <source ref="1"/>
</evidence>
<evidence type="ECO:0000305" key="6"/>
<name>PHF23_MOUSE</name>
<proteinExistence type="evidence at transcript level"/>
<gene>
    <name evidence="1" type="primary">Phf23</name>
</gene>
<reference key="1">
    <citation type="submission" date="2002-04" db="EMBL/GenBank/DDBJ databases">
        <title>Identification of JUNE-1, a novel gene encoding a PHD-containing protein.</title>
        <authorList>
            <person name="Yuan Z.Q."/>
            <person name="McCann T."/>
            <person name="Lappin T.R.J."/>
        </authorList>
    </citation>
    <scope>NUCLEOTIDE SEQUENCE [MRNA] (ISOFORMS 1 AND 2)</scope>
    <source>
        <tissue>Spleen</tissue>
    </source>
</reference>
<reference key="2">
    <citation type="journal article" date="2005" name="Science">
        <title>The transcriptional landscape of the mammalian genome.</title>
        <authorList>
            <person name="Carninci P."/>
            <person name="Kasukawa T."/>
            <person name="Katayama S."/>
            <person name="Gough J."/>
            <person name="Frith M.C."/>
            <person name="Maeda N."/>
            <person name="Oyama R."/>
            <person name="Ravasi T."/>
            <person name="Lenhard B."/>
            <person name="Wells C."/>
            <person name="Kodzius R."/>
            <person name="Shimokawa K."/>
            <person name="Bajic V.B."/>
            <person name="Brenner S.E."/>
            <person name="Batalov S."/>
            <person name="Forrest A.R."/>
            <person name="Zavolan M."/>
            <person name="Davis M.J."/>
            <person name="Wilming L.G."/>
            <person name="Aidinis V."/>
            <person name="Allen J.E."/>
            <person name="Ambesi-Impiombato A."/>
            <person name="Apweiler R."/>
            <person name="Aturaliya R.N."/>
            <person name="Bailey T.L."/>
            <person name="Bansal M."/>
            <person name="Baxter L."/>
            <person name="Beisel K.W."/>
            <person name="Bersano T."/>
            <person name="Bono H."/>
            <person name="Chalk A.M."/>
            <person name="Chiu K.P."/>
            <person name="Choudhary V."/>
            <person name="Christoffels A."/>
            <person name="Clutterbuck D.R."/>
            <person name="Crowe M.L."/>
            <person name="Dalla E."/>
            <person name="Dalrymple B.P."/>
            <person name="de Bono B."/>
            <person name="Della Gatta G."/>
            <person name="di Bernardo D."/>
            <person name="Down T."/>
            <person name="Engstrom P."/>
            <person name="Fagiolini M."/>
            <person name="Faulkner G."/>
            <person name="Fletcher C.F."/>
            <person name="Fukushima T."/>
            <person name="Furuno M."/>
            <person name="Futaki S."/>
            <person name="Gariboldi M."/>
            <person name="Georgii-Hemming P."/>
            <person name="Gingeras T.R."/>
            <person name="Gojobori T."/>
            <person name="Green R.E."/>
            <person name="Gustincich S."/>
            <person name="Harbers M."/>
            <person name="Hayashi Y."/>
            <person name="Hensch T.K."/>
            <person name="Hirokawa N."/>
            <person name="Hill D."/>
            <person name="Huminiecki L."/>
            <person name="Iacono M."/>
            <person name="Ikeo K."/>
            <person name="Iwama A."/>
            <person name="Ishikawa T."/>
            <person name="Jakt M."/>
            <person name="Kanapin A."/>
            <person name="Katoh M."/>
            <person name="Kawasawa Y."/>
            <person name="Kelso J."/>
            <person name="Kitamura H."/>
            <person name="Kitano H."/>
            <person name="Kollias G."/>
            <person name="Krishnan S.P."/>
            <person name="Kruger A."/>
            <person name="Kummerfeld S.K."/>
            <person name="Kurochkin I.V."/>
            <person name="Lareau L.F."/>
            <person name="Lazarevic D."/>
            <person name="Lipovich L."/>
            <person name="Liu J."/>
            <person name="Liuni S."/>
            <person name="McWilliam S."/>
            <person name="Madan Babu M."/>
            <person name="Madera M."/>
            <person name="Marchionni L."/>
            <person name="Matsuda H."/>
            <person name="Matsuzawa S."/>
            <person name="Miki H."/>
            <person name="Mignone F."/>
            <person name="Miyake S."/>
            <person name="Morris K."/>
            <person name="Mottagui-Tabar S."/>
            <person name="Mulder N."/>
            <person name="Nakano N."/>
            <person name="Nakauchi H."/>
            <person name="Ng P."/>
            <person name="Nilsson R."/>
            <person name="Nishiguchi S."/>
            <person name="Nishikawa S."/>
            <person name="Nori F."/>
            <person name="Ohara O."/>
            <person name="Okazaki Y."/>
            <person name="Orlando V."/>
            <person name="Pang K.C."/>
            <person name="Pavan W.J."/>
            <person name="Pavesi G."/>
            <person name="Pesole G."/>
            <person name="Petrovsky N."/>
            <person name="Piazza S."/>
            <person name="Reed J."/>
            <person name="Reid J.F."/>
            <person name="Ring B.Z."/>
            <person name="Ringwald M."/>
            <person name="Rost B."/>
            <person name="Ruan Y."/>
            <person name="Salzberg S.L."/>
            <person name="Sandelin A."/>
            <person name="Schneider C."/>
            <person name="Schoenbach C."/>
            <person name="Sekiguchi K."/>
            <person name="Semple C.A."/>
            <person name="Seno S."/>
            <person name="Sessa L."/>
            <person name="Sheng Y."/>
            <person name="Shibata Y."/>
            <person name="Shimada H."/>
            <person name="Shimada K."/>
            <person name="Silva D."/>
            <person name="Sinclair B."/>
            <person name="Sperling S."/>
            <person name="Stupka E."/>
            <person name="Sugiura K."/>
            <person name="Sultana R."/>
            <person name="Takenaka Y."/>
            <person name="Taki K."/>
            <person name="Tammoja K."/>
            <person name="Tan S.L."/>
            <person name="Tang S."/>
            <person name="Taylor M.S."/>
            <person name="Tegner J."/>
            <person name="Teichmann S.A."/>
            <person name="Ueda H.R."/>
            <person name="van Nimwegen E."/>
            <person name="Verardo R."/>
            <person name="Wei C.L."/>
            <person name="Yagi K."/>
            <person name="Yamanishi H."/>
            <person name="Zabarovsky E."/>
            <person name="Zhu S."/>
            <person name="Zimmer A."/>
            <person name="Hide W."/>
            <person name="Bult C."/>
            <person name="Grimmond S.M."/>
            <person name="Teasdale R.D."/>
            <person name="Liu E.T."/>
            <person name="Brusic V."/>
            <person name="Quackenbush J."/>
            <person name="Wahlestedt C."/>
            <person name="Mattick J.S."/>
            <person name="Hume D.A."/>
            <person name="Kai C."/>
            <person name="Sasaki D."/>
            <person name="Tomaru Y."/>
            <person name="Fukuda S."/>
            <person name="Kanamori-Katayama M."/>
            <person name="Suzuki M."/>
            <person name="Aoki J."/>
            <person name="Arakawa T."/>
            <person name="Iida J."/>
            <person name="Imamura K."/>
            <person name="Itoh M."/>
            <person name="Kato T."/>
            <person name="Kawaji H."/>
            <person name="Kawagashira N."/>
            <person name="Kawashima T."/>
            <person name="Kojima M."/>
            <person name="Kondo S."/>
            <person name="Konno H."/>
            <person name="Nakano K."/>
            <person name="Ninomiya N."/>
            <person name="Nishio T."/>
            <person name="Okada M."/>
            <person name="Plessy C."/>
            <person name="Shibata K."/>
            <person name="Shiraki T."/>
            <person name="Suzuki S."/>
            <person name="Tagami M."/>
            <person name="Waki K."/>
            <person name="Watahiki A."/>
            <person name="Okamura-Oho Y."/>
            <person name="Suzuki H."/>
            <person name="Kawai J."/>
            <person name="Hayashizaki Y."/>
        </authorList>
    </citation>
    <scope>NUCLEOTIDE SEQUENCE [LARGE SCALE MRNA] (ISOFORMS 1 AND 3)</scope>
    <source>
        <strain>C57BL/6J</strain>
        <strain>NOD</strain>
        <tissue>Forelimb</tissue>
        <tissue>Head</tissue>
    </source>
</reference>
<reference key="3">
    <citation type="journal article" date="2009" name="PLoS Biol.">
        <title>Lineage-specific biology revealed by a finished genome assembly of the mouse.</title>
        <authorList>
            <person name="Church D.M."/>
            <person name="Goodstadt L."/>
            <person name="Hillier L.W."/>
            <person name="Zody M.C."/>
            <person name="Goldstein S."/>
            <person name="She X."/>
            <person name="Bult C.J."/>
            <person name="Agarwala R."/>
            <person name="Cherry J.L."/>
            <person name="DiCuccio M."/>
            <person name="Hlavina W."/>
            <person name="Kapustin Y."/>
            <person name="Meric P."/>
            <person name="Maglott D."/>
            <person name="Birtle Z."/>
            <person name="Marques A.C."/>
            <person name="Graves T."/>
            <person name="Zhou S."/>
            <person name="Teague B."/>
            <person name="Potamousis K."/>
            <person name="Churas C."/>
            <person name="Place M."/>
            <person name="Herschleb J."/>
            <person name="Runnheim R."/>
            <person name="Forrest D."/>
            <person name="Amos-Landgraf J."/>
            <person name="Schwartz D.C."/>
            <person name="Cheng Z."/>
            <person name="Lindblad-Toh K."/>
            <person name="Eichler E.E."/>
            <person name="Ponting C.P."/>
        </authorList>
    </citation>
    <scope>NUCLEOTIDE SEQUENCE [LARGE SCALE GENOMIC DNA]</scope>
    <source>
        <strain>C57BL/6J</strain>
    </source>
</reference>
<reference key="4">
    <citation type="journal article" date="2004" name="Genome Res.">
        <title>The status, quality, and expansion of the NIH full-length cDNA project: the Mammalian Gene Collection (MGC).</title>
        <authorList>
            <consortium name="The MGC Project Team"/>
        </authorList>
    </citation>
    <scope>NUCLEOTIDE SEQUENCE [LARGE SCALE MRNA] (ISOFORM 2)</scope>
    <source>
        <strain>FVB/N-3</strain>
        <tissue>Mammary tumor</tissue>
    </source>
</reference>
<feature type="chain" id="PRO_0000302831" description="PHD finger protein 23">
    <location>
        <begin position="1"/>
        <end position="401"/>
    </location>
</feature>
<feature type="zinc finger region" description="PHD-type">
    <location>
        <begin position="337"/>
        <end position="385"/>
    </location>
</feature>
<feature type="region of interest" description="Disordered" evidence="2">
    <location>
        <begin position="1"/>
        <end position="30"/>
    </location>
</feature>
<feature type="region of interest" description="Disordered" evidence="2">
    <location>
        <begin position="50"/>
        <end position="123"/>
    </location>
</feature>
<feature type="region of interest" description="Disordered" evidence="2">
    <location>
        <begin position="139"/>
        <end position="320"/>
    </location>
</feature>
<feature type="compositionally biased region" description="Basic residues" evidence="2">
    <location>
        <begin position="92"/>
        <end position="101"/>
    </location>
</feature>
<feature type="compositionally biased region" description="Low complexity" evidence="2">
    <location>
        <begin position="147"/>
        <end position="161"/>
    </location>
</feature>
<feature type="compositionally biased region" description="Basic residues" evidence="2">
    <location>
        <begin position="177"/>
        <end position="186"/>
    </location>
</feature>
<feature type="compositionally biased region" description="Basic residues" evidence="2">
    <location>
        <begin position="212"/>
        <end position="224"/>
    </location>
</feature>
<feature type="compositionally biased region" description="Pro residues" evidence="2">
    <location>
        <begin position="231"/>
        <end position="240"/>
    </location>
</feature>
<feature type="compositionally biased region" description="Acidic residues" evidence="2">
    <location>
        <begin position="244"/>
        <end position="262"/>
    </location>
</feature>
<feature type="compositionally biased region" description="Pro residues" evidence="2">
    <location>
        <begin position="271"/>
        <end position="283"/>
    </location>
</feature>
<feature type="compositionally biased region" description="Polar residues" evidence="2">
    <location>
        <begin position="303"/>
        <end position="316"/>
    </location>
</feature>
<feature type="modified residue" description="N-acetylmethionine" evidence="1">
    <location>
        <position position="1"/>
    </location>
</feature>
<feature type="modified residue" description="Phosphoserine" evidence="1">
    <location>
        <position position="124"/>
    </location>
</feature>
<feature type="modified residue" description="Phosphoserine" evidence="1">
    <location>
        <position position="147"/>
    </location>
</feature>
<feature type="modified residue" description="Phosphoserine" evidence="1">
    <location>
        <position position="150"/>
    </location>
</feature>
<feature type="modified residue" description="Phosphoserine" evidence="1">
    <location>
        <position position="313"/>
    </location>
</feature>
<feature type="modified residue" description="Phosphoserine" evidence="1">
    <location>
        <position position="314"/>
    </location>
</feature>
<feature type="modified residue" description="Phosphoserine" evidence="1">
    <location>
        <position position="315"/>
    </location>
</feature>
<feature type="modified residue" description="Phosphoserine" evidence="1">
    <location>
        <position position="398"/>
    </location>
</feature>
<feature type="splice variant" id="VSP_027964" description="In isoform 3." evidence="4">
    <location>
        <begin position="1"/>
        <end position="130"/>
    </location>
</feature>
<feature type="splice variant" id="VSP_027965" description="In isoform 2." evidence="3 5">
    <location>
        <begin position="54"/>
        <end position="120"/>
    </location>
</feature>
<feature type="sequence conflict" description="In Ref. 2; BAB31562." evidence="6" ref="2">
    <original>S</original>
    <variation>R</variation>
    <location>
        <position position="9"/>
    </location>
</feature>
<feature type="sequence conflict" description="In Ref. 2; BAC27285." evidence="6" ref="2">
    <original>L</original>
    <variation>P</variation>
    <location>
        <position position="149"/>
    </location>
</feature>
<feature type="sequence conflict" description="In Ref. 2; BAC27285." evidence="6" ref="2">
    <original>C</original>
    <variation>Y</variation>
    <location>
        <position position="382"/>
    </location>
</feature>
<sequence length="401" mass="43547">MLEAMAEPSPEDPPPTLKPETQPPEKRRRTIEDFNKFCSFVLAYAGYIPPSKEESDWPASGSSSPLRGESAADSDGWDSAPSDLRTIQTFVKKAKSSKRRAVQSGPTQPGPPRSTFSRLQAPDSATLLEKMKLKDSLFDLDGPKVASPLSPTSLTHTSRPPAALAPVPLSQGDLSQPRKKDRKNRKLGPGGGAGFGVLRRPRPAPGDGEKRSRIKKSKKRKLKKADRGDRLPPPGPPRAPPSDTDSEEEEEEEEEEDDEEEMTVGGGVPAPVLPTPPEAPRPPVTVHSEGAPPTDSEGKDVGSTETSQDGDASSSEGEMRVMDEDIMVESGDDSWDLITCYCRKPFAGRPMIECSLCGTWIHLSCAKIKKTNVPDFFYCQKCKELRPEARRLGGLPKSGEP</sequence>
<comment type="function">
    <text evidence="1">Acts as a negative regulator of autophagy, through promoting ubiquitination and degradation of LRSAM1, an E3 ubiquitin ligase that promotes autophagy in response to starvation or infecting bacteria.</text>
</comment>
<comment type="subunit">
    <text evidence="1">Interacts with LRSAM1.</text>
</comment>
<comment type="subcellular location">
    <subcellularLocation>
        <location evidence="1">Nucleus</location>
    </subcellularLocation>
    <subcellularLocation>
        <location evidence="1">Cytoplasm</location>
    </subcellularLocation>
    <text evidence="1">Mainly present in the nucleus and part in the cytoplasm.</text>
</comment>
<comment type="alternative products">
    <event type="alternative splicing"/>
    <isoform>
        <id>Q8BSN5-1</id>
        <name>1</name>
        <sequence type="displayed"/>
    </isoform>
    <isoform>
        <id>Q8BSN5-2</id>
        <name>2</name>
        <name>JUNE1A</name>
        <sequence type="described" ref="VSP_027965"/>
    </isoform>
    <isoform>
        <id>Q8BSN5-3</id>
        <name>3</name>
        <sequence type="described" ref="VSP_027964"/>
    </isoform>
</comment>
<comment type="domain">
    <text evidence="1">The PHD-type zinc-finger domain is required for interaction with LRSAM1 and negative regulation of autophagy.</text>
</comment>
<comment type="similarity">
    <text evidence="6">Belongs to the PHF23 family.</text>
</comment>
<comment type="sequence caution" evidence="6">
    <conflict type="erroneous initiation">
        <sequence resource="EMBL-CDS" id="AAH33533"/>
    </conflict>
</comment>
<comment type="sequence caution" evidence="6">
    <conflict type="erroneous initiation">
        <sequence resource="EMBL-CDS" id="BAC25679"/>
    </conflict>
</comment>
<protein>
    <recommendedName>
        <fullName evidence="1">PHD finger protein 23</fullName>
    </recommendedName>
    <alternativeName>
        <fullName evidence="5">PDH-containing protein JUNE-1</fullName>
    </alternativeName>
</protein>